<keyword id="KW-0067">ATP-binding</keyword>
<keyword id="KW-0131">Cell cycle</keyword>
<keyword id="KW-0132">Cell division</keyword>
<keyword id="KW-0133">Cell shape</keyword>
<keyword id="KW-0961">Cell wall biogenesis/degradation</keyword>
<keyword id="KW-0963">Cytoplasm</keyword>
<keyword id="KW-0436">Ligase</keyword>
<keyword id="KW-0547">Nucleotide-binding</keyword>
<keyword id="KW-0573">Peptidoglycan synthesis</keyword>
<keyword id="KW-1185">Reference proteome</keyword>
<evidence type="ECO:0000255" key="1">
    <source>
        <dbReference type="HAMAP-Rule" id="MF_00046"/>
    </source>
</evidence>
<comment type="function">
    <text evidence="1">Cell wall formation.</text>
</comment>
<comment type="catalytic activity">
    <reaction evidence="1">
        <text>UDP-N-acetyl-alpha-D-muramate + L-alanine + ATP = UDP-N-acetyl-alpha-D-muramoyl-L-alanine + ADP + phosphate + H(+)</text>
        <dbReference type="Rhea" id="RHEA:23372"/>
        <dbReference type="ChEBI" id="CHEBI:15378"/>
        <dbReference type="ChEBI" id="CHEBI:30616"/>
        <dbReference type="ChEBI" id="CHEBI:43474"/>
        <dbReference type="ChEBI" id="CHEBI:57972"/>
        <dbReference type="ChEBI" id="CHEBI:70757"/>
        <dbReference type="ChEBI" id="CHEBI:83898"/>
        <dbReference type="ChEBI" id="CHEBI:456216"/>
        <dbReference type="EC" id="6.3.2.8"/>
    </reaction>
</comment>
<comment type="pathway">
    <text evidence="1">Cell wall biogenesis; peptidoglycan biosynthesis.</text>
</comment>
<comment type="subcellular location">
    <subcellularLocation>
        <location evidence="1">Cytoplasm</location>
    </subcellularLocation>
</comment>
<comment type="similarity">
    <text evidence="1">Belongs to the MurCDEF family.</text>
</comment>
<feature type="chain" id="PRO_1000004335" description="UDP-N-acetylmuramate--L-alanine ligase">
    <location>
        <begin position="1"/>
        <end position="458"/>
    </location>
</feature>
<feature type="binding site" evidence="1">
    <location>
        <begin position="118"/>
        <end position="124"/>
    </location>
    <ligand>
        <name>ATP</name>
        <dbReference type="ChEBI" id="CHEBI:30616"/>
    </ligand>
</feature>
<accession>A0PXK5</accession>
<sequence length="458" mass="50523">MSFNFLKDNNKKVHFIGIGGISMSGLAEILLNSGYRVSGSDRSESDLTKHLQAKGAEIYIGHNGNNLKDVDLVVYTAAIPDSNPELVKARECNIQTMDRAEFLGHVMQGHKYNIAISGTHGKTTTTSMFSHISLSANLDPTILVGGNLDVINGNVRVGNSEYFVTEACEYKASFLKFYPYIGVILNIEADHLDFYKDINDIQNTFLKFAKLIPNDGFLIVNADDKRCVEVSKQVDCNVITFGINNGDVRAKNIVFNNGRPTFDVYRNEEKLFTLTLNVPGNHNILDALASISSALSLNVPVDSIIEGLSTFNGAHRRFEIKGKVDGITVVDDYAHHPTEIKAALNAAKNFPHKRVFCVFQPHTYSRTISLFDDFANSFSNADTLVLADIYAAREKDTGVVSSTMLGDKIRENGVNCKNLHSFEDIVTFLKGELKDGDLLITIGAGDVYRVGEMFLEAK</sequence>
<reference key="1">
    <citation type="journal article" date="2006" name="Nat. Biotechnol.">
        <title>The genome and transcriptomes of the anti-tumor agent Clostridium novyi-NT.</title>
        <authorList>
            <person name="Bettegowda C."/>
            <person name="Huang X."/>
            <person name="Lin J."/>
            <person name="Cheong I."/>
            <person name="Kohli M."/>
            <person name="Szabo S.A."/>
            <person name="Zhang X."/>
            <person name="Diaz L.A. Jr."/>
            <person name="Velculescu V.E."/>
            <person name="Parmigiani G."/>
            <person name="Kinzler K.W."/>
            <person name="Vogelstein B."/>
            <person name="Zhou S."/>
        </authorList>
    </citation>
    <scope>NUCLEOTIDE SEQUENCE [LARGE SCALE GENOMIC DNA]</scope>
    <source>
        <strain>NT</strain>
    </source>
</reference>
<proteinExistence type="inferred from homology"/>
<organism>
    <name type="scientific">Clostridium novyi (strain NT)</name>
    <dbReference type="NCBI Taxonomy" id="386415"/>
    <lineage>
        <taxon>Bacteria</taxon>
        <taxon>Bacillati</taxon>
        <taxon>Bacillota</taxon>
        <taxon>Clostridia</taxon>
        <taxon>Eubacteriales</taxon>
        <taxon>Clostridiaceae</taxon>
        <taxon>Clostridium</taxon>
    </lineage>
</organism>
<dbReference type="EC" id="6.3.2.8" evidence="1"/>
<dbReference type="EMBL" id="CP000382">
    <property type="protein sequence ID" value="ABK62208.1"/>
    <property type="molecule type" value="Genomic_DNA"/>
</dbReference>
<dbReference type="RefSeq" id="WP_011721128.1">
    <property type="nucleotide sequence ID" value="NC_008593.1"/>
</dbReference>
<dbReference type="SMR" id="A0PXK5"/>
<dbReference type="STRING" id="386415.NT01CX_1011"/>
<dbReference type="KEGG" id="cno:NT01CX_1011"/>
<dbReference type="PATRIC" id="fig|386415.7.peg.133"/>
<dbReference type="eggNOG" id="COG0773">
    <property type="taxonomic scope" value="Bacteria"/>
</dbReference>
<dbReference type="HOGENOM" id="CLU_028104_1_0_9"/>
<dbReference type="UniPathway" id="UPA00219"/>
<dbReference type="Proteomes" id="UP000008220">
    <property type="component" value="Chromosome"/>
</dbReference>
<dbReference type="GO" id="GO:0005737">
    <property type="term" value="C:cytoplasm"/>
    <property type="evidence" value="ECO:0007669"/>
    <property type="project" value="UniProtKB-SubCell"/>
</dbReference>
<dbReference type="GO" id="GO:0005524">
    <property type="term" value="F:ATP binding"/>
    <property type="evidence" value="ECO:0007669"/>
    <property type="project" value="UniProtKB-UniRule"/>
</dbReference>
<dbReference type="GO" id="GO:0008763">
    <property type="term" value="F:UDP-N-acetylmuramate-L-alanine ligase activity"/>
    <property type="evidence" value="ECO:0007669"/>
    <property type="project" value="UniProtKB-UniRule"/>
</dbReference>
<dbReference type="GO" id="GO:0051301">
    <property type="term" value="P:cell division"/>
    <property type="evidence" value="ECO:0007669"/>
    <property type="project" value="UniProtKB-KW"/>
</dbReference>
<dbReference type="GO" id="GO:0071555">
    <property type="term" value="P:cell wall organization"/>
    <property type="evidence" value="ECO:0007669"/>
    <property type="project" value="UniProtKB-KW"/>
</dbReference>
<dbReference type="GO" id="GO:0009252">
    <property type="term" value="P:peptidoglycan biosynthetic process"/>
    <property type="evidence" value="ECO:0007669"/>
    <property type="project" value="UniProtKB-UniRule"/>
</dbReference>
<dbReference type="GO" id="GO:0008360">
    <property type="term" value="P:regulation of cell shape"/>
    <property type="evidence" value="ECO:0007669"/>
    <property type="project" value="UniProtKB-KW"/>
</dbReference>
<dbReference type="Gene3D" id="3.90.190.20">
    <property type="entry name" value="Mur ligase, C-terminal domain"/>
    <property type="match status" value="1"/>
</dbReference>
<dbReference type="Gene3D" id="3.40.1190.10">
    <property type="entry name" value="Mur-like, catalytic domain"/>
    <property type="match status" value="1"/>
</dbReference>
<dbReference type="Gene3D" id="3.40.50.720">
    <property type="entry name" value="NAD(P)-binding Rossmann-like Domain"/>
    <property type="match status" value="1"/>
</dbReference>
<dbReference type="HAMAP" id="MF_00046">
    <property type="entry name" value="MurC"/>
    <property type="match status" value="1"/>
</dbReference>
<dbReference type="InterPro" id="IPR036565">
    <property type="entry name" value="Mur-like_cat_sf"/>
</dbReference>
<dbReference type="InterPro" id="IPR004101">
    <property type="entry name" value="Mur_ligase_C"/>
</dbReference>
<dbReference type="InterPro" id="IPR036615">
    <property type="entry name" value="Mur_ligase_C_dom_sf"/>
</dbReference>
<dbReference type="InterPro" id="IPR013221">
    <property type="entry name" value="Mur_ligase_cen"/>
</dbReference>
<dbReference type="InterPro" id="IPR000713">
    <property type="entry name" value="Mur_ligase_N"/>
</dbReference>
<dbReference type="InterPro" id="IPR050061">
    <property type="entry name" value="MurCDEF_pg_biosynth"/>
</dbReference>
<dbReference type="InterPro" id="IPR005758">
    <property type="entry name" value="UDP-N-AcMur_Ala_ligase_MurC"/>
</dbReference>
<dbReference type="NCBIfam" id="TIGR01082">
    <property type="entry name" value="murC"/>
    <property type="match status" value="1"/>
</dbReference>
<dbReference type="PANTHER" id="PTHR43445:SF3">
    <property type="entry name" value="UDP-N-ACETYLMURAMATE--L-ALANINE LIGASE"/>
    <property type="match status" value="1"/>
</dbReference>
<dbReference type="PANTHER" id="PTHR43445">
    <property type="entry name" value="UDP-N-ACETYLMURAMATE--L-ALANINE LIGASE-RELATED"/>
    <property type="match status" value="1"/>
</dbReference>
<dbReference type="Pfam" id="PF01225">
    <property type="entry name" value="Mur_ligase"/>
    <property type="match status" value="1"/>
</dbReference>
<dbReference type="Pfam" id="PF02875">
    <property type="entry name" value="Mur_ligase_C"/>
    <property type="match status" value="1"/>
</dbReference>
<dbReference type="Pfam" id="PF08245">
    <property type="entry name" value="Mur_ligase_M"/>
    <property type="match status" value="1"/>
</dbReference>
<dbReference type="SUPFAM" id="SSF51984">
    <property type="entry name" value="MurCD N-terminal domain"/>
    <property type="match status" value="1"/>
</dbReference>
<dbReference type="SUPFAM" id="SSF53623">
    <property type="entry name" value="MurD-like peptide ligases, catalytic domain"/>
    <property type="match status" value="1"/>
</dbReference>
<dbReference type="SUPFAM" id="SSF53244">
    <property type="entry name" value="MurD-like peptide ligases, peptide-binding domain"/>
    <property type="match status" value="1"/>
</dbReference>
<gene>
    <name evidence="1" type="primary">murC</name>
    <name type="ordered locus">NT01CX_1011</name>
</gene>
<name>MURC_CLONN</name>
<protein>
    <recommendedName>
        <fullName evidence="1">UDP-N-acetylmuramate--L-alanine ligase</fullName>
        <ecNumber evidence="1">6.3.2.8</ecNumber>
    </recommendedName>
    <alternativeName>
        <fullName evidence="1">UDP-N-acetylmuramoyl-L-alanine synthetase</fullName>
    </alternativeName>
</protein>